<organism>
    <name type="scientific">Lysinibacillus sphaericus (strain C3-41)</name>
    <dbReference type="NCBI Taxonomy" id="444177"/>
    <lineage>
        <taxon>Bacteria</taxon>
        <taxon>Bacillati</taxon>
        <taxon>Bacillota</taxon>
        <taxon>Bacilli</taxon>
        <taxon>Bacillales</taxon>
        <taxon>Bacillaceae</taxon>
        <taxon>Lysinibacillus</taxon>
    </lineage>
</organism>
<protein>
    <recommendedName>
        <fullName evidence="1">Small ribosomal subunit protein bS21</fullName>
    </recommendedName>
    <alternativeName>
        <fullName evidence="2">30S ribosomal protein S21</fullName>
    </alternativeName>
</protein>
<proteinExistence type="inferred from homology"/>
<accession>B1HTK2</accession>
<feature type="chain" id="PRO_1000120637" description="Small ribosomal subunit protein bS21">
    <location>
        <begin position="1"/>
        <end position="57"/>
    </location>
</feature>
<keyword id="KW-0687">Ribonucleoprotein</keyword>
<keyword id="KW-0689">Ribosomal protein</keyword>
<evidence type="ECO:0000255" key="1">
    <source>
        <dbReference type="HAMAP-Rule" id="MF_00358"/>
    </source>
</evidence>
<evidence type="ECO:0000305" key="2"/>
<dbReference type="EMBL" id="CP000817">
    <property type="protein sequence ID" value="ACA41206.1"/>
    <property type="molecule type" value="Genomic_DNA"/>
</dbReference>
<dbReference type="RefSeq" id="WP_004227078.1">
    <property type="nucleotide sequence ID" value="NC_010382.1"/>
</dbReference>
<dbReference type="SMR" id="B1HTK2"/>
<dbReference type="EnsemblBacteria" id="ACA41206">
    <property type="protein sequence ID" value="ACA41206"/>
    <property type="gene ID" value="Bsph_3722"/>
</dbReference>
<dbReference type="GeneID" id="97821888"/>
<dbReference type="KEGG" id="lsp:Bsph_3722"/>
<dbReference type="HOGENOM" id="CLU_159258_3_2_9"/>
<dbReference type="Proteomes" id="UP000002164">
    <property type="component" value="Chromosome"/>
</dbReference>
<dbReference type="GO" id="GO:1990904">
    <property type="term" value="C:ribonucleoprotein complex"/>
    <property type="evidence" value="ECO:0007669"/>
    <property type="project" value="UniProtKB-KW"/>
</dbReference>
<dbReference type="GO" id="GO:0005840">
    <property type="term" value="C:ribosome"/>
    <property type="evidence" value="ECO:0007669"/>
    <property type="project" value="UniProtKB-KW"/>
</dbReference>
<dbReference type="GO" id="GO:0003735">
    <property type="term" value="F:structural constituent of ribosome"/>
    <property type="evidence" value="ECO:0007669"/>
    <property type="project" value="InterPro"/>
</dbReference>
<dbReference type="GO" id="GO:0006412">
    <property type="term" value="P:translation"/>
    <property type="evidence" value="ECO:0007669"/>
    <property type="project" value="UniProtKB-UniRule"/>
</dbReference>
<dbReference type="Gene3D" id="1.20.5.1150">
    <property type="entry name" value="Ribosomal protein S8"/>
    <property type="match status" value="1"/>
</dbReference>
<dbReference type="HAMAP" id="MF_00358">
    <property type="entry name" value="Ribosomal_bS21"/>
    <property type="match status" value="1"/>
</dbReference>
<dbReference type="InterPro" id="IPR001911">
    <property type="entry name" value="Ribosomal_bS21"/>
</dbReference>
<dbReference type="InterPro" id="IPR018278">
    <property type="entry name" value="Ribosomal_bS21_CS"/>
</dbReference>
<dbReference type="InterPro" id="IPR038380">
    <property type="entry name" value="Ribosomal_bS21_sf"/>
</dbReference>
<dbReference type="NCBIfam" id="TIGR00030">
    <property type="entry name" value="S21p"/>
    <property type="match status" value="1"/>
</dbReference>
<dbReference type="PANTHER" id="PTHR21109">
    <property type="entry name" value="MITOCHONDRIAL 28S RIBOSOMAL PROTEIN S21"/>
    <property type="match status" value="1"/>
</dbReference>
<dbReference type="PANTHER" id="PTHR21109:SF22">
    <property type="entry name" value="SMALL RIBOSOMAL SUBUNIT PROTEIN BS21"/>
    <property type="match status" value="1"/>
</dbReference>
<dbReference type="Pfam" id="PF01165">
    <property type="entry name" value="Ribosomal_S21"/>
    <property type="match status" value="1"/>
</dbReference>
<dbReference type="PRINTS" id="PR00976">
    <property type="entry name" value="RIBOSOMALS21"/>
</dbReference>
<dbReference type="PROSITE" id="PS01181">
    <property type="entry name" value="RIBOSOMAL_S21"/>
    <property type="match status" value="1"/>
</dbReference>
<name>RS21_LYSSC</name>
<gene>
    <name evidence="1" type="primary">rpsU</name>
    <name type="ordered locus">Bsph_3722</name>
</gene>
<sequence>MSKTVVRKNESLEDALRRFKRTVSKSGTIQEVRKREFYEKPSVKRKKKSEAARKRKW</sequence>
<comment type="similarity">
    <text evidence="1">Belongs to the bacterial ribosomal protein bS21 family.</text>
</comment>
<reference key="1">
    <citation type="journal article" date="2008" name="J. Bacteriol.">
        <title>Complete genome sequence of the mosquitocidal bacterium Bacillus sphaericus C3-41 and comparison with those of closely related Bacillus species.</title>
        <authorList>
            <person name="Hu X."/>
            <person name="Fan W."/>
            <person name="Han B."/>
            <person name="Liu H."/>
            <person name="Zheng D."/>
            <person name="Li Q."/>
            <person name="Dong W."/>
            <person name="Yan J."/>
            <person name="Gao M."/>
            <person name="Berry C."/>
            <person name="Yuan Z."/>
        </authorList>
    </citation>
    <scope>NUCLEOTIDE SEQUENCE [LARGE SCALE GENOMIC DNA]</scope>
    <source>
        <strain>C3-41</strain>
    </source>
</reference>